<sequence length="153" mass="17241">MTLGAATANDPIDSTLASPSRDEQRRQANQAAFSRDLEFLSSLANPYYLNHLALSGALSSPSFKRYLKYLDYFRHPKYVKYLHYPQALHFLDLLQNEEEFRLACRDPAFAGEVMAKQIGHWATWRDPENAAGQEQDEAGEQGEARETTGGQTA</sequence>
<reference key="1">
    <citation type="journal article" date="2006" name="Nature">
        <title>Insights from the genome of the biotrophic fungal plant pathogen Ustilago maydis.</title>
        <authorList>
            <person name="Kaemper J."/>
            <person name="Kahmann R."/>
            <person name="Boelker M."/>
            <person name="Ma L.-J."/>
            <person name="Brefort T."/>
            <person name="Saville B.J."/>
            <person name="Banuett F."/>
            <person name="Kronstad J.W."/>
            <person name="Gold S.E."/>
            <person name="Mueller O."/>
            <person name="Perlin M.H."/>
            <person name="Woesten H.A.B."/>
            <person name="de Vries R."/>
            <person name="Ruiz-Herrera J."/>
            <person name="Reynaga-Pena C.G."/>
            <person name="Snetselaar K."/>
            <person name="McCann M."/>
            <person name="Perez-Martin J."/>
            <person name="Feldbruegge M."/>
            <person name="Basse C.W."/>
            <person name="Steinberg G."/>
            <person name="Ibeas J.I."/>
            <person name="Holloman W."/>
            <person name="Guzman P."/>
            <person name="Farman M.L."/>
            <person name="Stajich J.E."/>
            <person name="Sentandreu R."/>
            <person name="Gonzalez-Prieto J.M."/>
            <person name="Kennell J.C."/>
            <person name="Molina L."/>
            <person name="Schirawski J."/>
            <person name="Mendoza-Mendoza A."/>
            <person name="Greilinger D."/>
            <person name="Muench K."/>
            <person name="Roessel N."/>
            <person name="Scherer M."/>
            <person name="Vranes M."/>
            <person name="Ladendorf O."/>
            <person name="Vincon V."/>
            <person name="Fuchs U."/>
            <person name="Sandrock B."/>
            <person name="Meng S."/>
            <person name="Ho E.C.H."/>
            <person name="Cahill M.J."/>
            <person name="Boyce K.J."/>
            <person name="Klose J."/>
            <person name="Klosterman S.J."/>
            <person name="Deelstra H.J."/>
            <person name="Ortiz-Castellanos L."/>
            <person name="Li W."/>
            <person name="Sanchez-Alonso P."/>
            <person name="Schreier P.H."/>
            <person name="Haeuser-Hahn I."/>
            <person name="Vaupel M."/>
            <person name="Koopmann E."/>
            <person name="Friedrich G."/>
            <person name="Voss H."/>
            <person name="Schlueter T."/>
            <person name="Margolis J."/>
            <person name="Platt D."/>
            <person name="Swimmer C."/>
            <person name="Gnirke A."/>
            <person name="Chen F."/>
            <person name="Vysotskaia V."/>
            <person name="Mannhaupt G."/>
            <person name="Gueldener U."/>
            <person name="Muensterkoetter M."/>
            <person name="Haase D."/>
            <person name="Oesterheld M."/>
            <person name="Mewes H.-W."/>
            <person name="Mauceli E.W."/>
            <person name="DeCaprio D."/>
            <person name="Wade C.M."/>
            <person name="Butler J."/>
            <person name="Young S.K."/>
            <person name="Jaffe D.B."/>
            <person name="Calvo S.E."/>
            <person name="Nusbaum C."/>
            <person name="Galagan J.E."/>
            <person name="Birren B.W."/>
        </authorList>
    </citation>
    <scope>NUCLEOTIDE SEQUENCE [LARGE SCALE GENOMIC DNA]</scope>
    <source>
        <strain>DSM 14603 / FGSC 9021 / UM521</strain>
    </source>
</reference>
<reference key="2">
    <citation type="submission" date="2014-09" db="EMBL/GenBank/DDBJ databases">
        <authorList>
            <person name="Gueldener U."/>
            <person name="Muensterkoetter M."/>
            <person name="Walter M.C."/>
            <person name="Mannhaupt G."/>
            <person name="Kahmann R."/>
        </authorList>
    </citation>
    <scope>GENOME REANNOTATION</scope>
    <source>
        <strain>DSM 14603 / FGSC 9021 / UM521</strain>
    </source>
</reference>
<accession>Q4P308</accession>
<accession>A0A0D1BX45</accession>
<organism>
    <name type="scientific">Mycosarcoma maydis</name>
    <name type="common">Corn smut fungus</name>
    <name type="synonym">Ustilago maydis</name>
    <dbReference type="NCBI Taxonomy" id="5270"/>
    <lineage>
        <taxon>Eukaryota</taxon>
        <taxon>Fungi</taxon>
        <taxon>Dikarya</taxon>
        <taxon>Basidiomycota</taxon>
        <taxon>Ustilaginomycotina</taxon>
        <taxon>Ustilaginomycetes</taxon>
        <taxon>Ustilaginales</taxon>
        <taxon>Ustilaginaceae</taxon>
        <taxon>Mycosarcoma</taxon>
    </lineage>
</organism>
<comment type="function">
    <text evidence="1">Component of the Mediator complex, a coactivator involved in the regulated transcription of nearly all RNA polymerase II-dependent genes. Mediator functions as a bridge to convey information from gene-specific regulatory proteins to the basal RNA polymerase II transcription machinery. Mediator is recruited to promoters by direct interactions with regulatory proteins and serves as a scaffold for the assembly of a functional preinitiation complex with RNA polymerase II and the general transcription factors (By similarity).</text>
</comment>
<comment type="subunit">
    <text evidence="1">Component of the Mediator complex.</text>
</comment>
<comment type="subcellular location">
    <subcellularLocation>
        <location evidence="1">Nucleus</location>
    </subcellularLocation>
</comment>
<comment type="similarity">
    <text evidence="3">Belongs to the Mediator complex subunit 31 family.</text>
</comment>
<feature type="chain" id="PRO_0000305730" description="Mediator of RNA polymerase II transcription subunit 31">
    <location>
        <begin position="1"/>
        <end position="153"/>
    </location>
</feature>
<feature type="region of interest" description="Disordered" evidence="2">
    <location>
        <begin position="1"/>
        <end position="28"/>
    </location>
</feature>
<feature type="region of interest" description="Disordered" evidence="2">
    <location>
        <begin position="125"/>
        <end position="153"/>
    </location>
</feature>
<dbReference type="EMBL" id="CM003157">
    <property type="protein sequence ID" value="KIS66512.1"/>
    <property type="molecule type" value="Genomic_DNA"/>
</dbReference>
<dbReference type="RefSeq" id="XP_011391830.1">
    <property type="nucleotide sequence ID" value="XM_011393528.1"/>
</dbReference>
<dbReference type="SMR" id="Q4P308"/>
<dbReference type="STRING" id="237631.Q4P308"/>
<dbReference type="EnsemblFungi" id="KIS66512">
    <property type="protein sequence ID" value="KIS66512"/>
    <property type="gene ID" value="UMAG_05505"/>
</dbReference>
<dbReference type="GeneID" id="23565379"/>
<dbReference type="KEGG" id="uma:UMAG_05505"/>
<dbReference type="VEuPathDB" id="FungiDB:UMAG_05505"/>
<dbReference type="eggNOG" id="KOG4086">
    <property type="taxonomic scope" value="Eukaryota"/>
</dbReference>
<dbReference type="HOGENOM" id="CLU_071681_3_1_1"/>
<dbReference type="InParanoid" id="Q4P308"/>
<dbReference type="OMA" id="HWATWRD"/>
<dbReference type="OrthoDB" id="10257739at2759"/>
<dbReference type="Proteomes" id="UP000000561">
    <property type="component" value="Chromosome 18"/>
</dbReference>
<dbReference type="GO" id="GO:0070847">
    <property type="term" value="C:core mediator complex"/>
    <property type="evidence" value="ECO:0000318"/>
    <property type="project" value="GO_Central"/>
</dbReference>
<dbReference type="GO" id="GO:0016592">
    <property type="term" value="C:mediator complex"/>
    <property type="evidence" value="ECO:0000318"/>
    <property type="project" value="GO_Central"/>
</dbReference>
<dbReference type="GO" id="GO:0003712">
    <property type="term" value="F:transcription coregulator activity"/>
    <property type="evidence" value="ECO:0007669"/>
    <property type="project" value="InterPro"/>
</dbReference>
<dbReference type="GO" id="GO:0006357">
    <property type="term" value="P:regulation of transcription by RNA polymerase II"/>
    <property type="evidence" value="ECO:0000318"/>
    <property type="project" value="GO_Central"/>
</dbReference>
<dbReference type="FunFam" id="1.10.10.1340:FF:000008">
    <property type="entry name" value="Mediator of RNA polymerase II transcription subunit 31"/>
    <property type="match status" value="1"/>
</dbReference>
<dbReference type="Gene3D" id="1.10.10.1340">
    <property type="entry name" value="Mediator of RNA polymerase II, submodule Med31 (Soh1)"/>
    <property type="match status" value="1"/>
</dbReference>
<dbReference type="InterPro" id="IPR038089">
    <property type="entry name" value="Med31_sf"/>
</dbReference>
<dbReference type="InterPro" id="IPR008831">
    <property type="entry name" value="Mediator_Med31"/>
</dbReference>
<dbReference type="PANTHER" id="PTHR13186">
    <property type="entry name" value="MEDIATOR OF RNA POLYMERASE II TRANSCRIPTION SUBUNIT 31"/>
    <property type="match status" value="1"/>
</dbReference>
<dbReference type="Pfam" id="PF05669">
    <property type="entry name" value="Med31"/>
    <property type="match status" value="1"/>
</dbReference>
<protein>
    <recommendedName>
        <fullName>Mediator of RNA polymerase II transcription subunit 31</fullName>
    </recommendedName>
    <alternativeName>
        <fullName>Mediator complex subunit 31</fullName>
    </alternativeName>
</protein>
<evidence type="ECO:0000250" key="1"/>
<evidence type="ECO:0000256" key="2">
    <source>
        <dbReference type="SAM" id="MobiDB-lite"/>
    </source>
</evidence>
<evidence type="ECO:0000305" key="3"/>
<keyword id="KW-0010">Activator</keyword>
<keyword id="KW-0539">Nucleus</keyword>
<keyword id="KW-1185">Reference proteome</keyword>
<keyword id="KW-0804">Transcription</keyword>
<keyword id="KW-0805">Transcription regulation</keyword>
<gene>
    <name type="primary">SOH1</name>
    <name type="synonym">MED31</name>
    <name type="ORF">UMAG_05505</name>
</gene>
<proteinExistence type="inferred from homology"/>
<name>MED31_MYCMD</name>